<accession>A0A1P8B590</accession>
<accession>O23331</accession>
<accession>Q8RXR4</accession>
<protein>
    <recommendedName>
        <fullName evidence="7">Protein IQ-DOMAIN 19</fullName>
        <shortName evidence="7">AtIQD19</shortName>
    </recommendedName>
    <alternativeName>
        <fullName evidence="6">Protein FURCA 3</fullName>
    </alternativeName>
</protein>
<reference key="1">
    <citation type="journal article" date="1998" name="Nature">
        <title>Analysis of 1.9 Mb of contiguous sequence from chromosome 4 of Arabidopsis thaliana.</title>
        <authorList>
            <person name="Bevan M."/>
            <person name="Bancroft I."/>
            <person name="Bent E."/>
            <person name="Love K."/>
            <person name="Goodman H.M."/>
            <person name="Dean C."/>
            <person name="Bergkamp R."/>
            <person name="Dirkse W."/>
            <person name="van Staveren M."/>
            <person name="Stiekema W."/>
            <person name="Drost L."/>
            <person name="Ridley P."/>
            <person name="Hudson S.-A."/>
            <person name="Patel K."/>
            <person name="Murphy G."/>
            <person name="Piffanelli P."/>
            <person name="Wedler H."/>
            <person name="Wedler E."/>
            <person name="Wambutt R."/>
            <person name="Weitzenegger T."/>
            <person name="Pohl T."/>
            <person name="Terryn N."/>
            <person name="Gielen J."/>
            <person name="Villarroel R."/>
            <person name="De Clercq R."/>
            <person name="van Montagu M."/>
            <person name="Lecharny A."/>
            <person name="Aubourg S."/>
            <person name="Gy I."/>
            <person name="Kreis M."/>
            <person name="Lao N."/>
            <person name="Kavanagh T."/>
            <person name="Hempel S."/>
            <person name="Kotter P."/>
            <person name="Entian K.-D."/>
            <person name="Rieger M."/>
            <person name="Schaefer M."/>
            <person name="Funk B."/>
            <person name="Mueller-Auer S."/>
            <person name="Silvey M."/>
            <person name="James R."/>
            <person name="Monfort A."/>
            <person name="Pons A."/>
            <person name="Puigdomenech P."/>
            <person name="Douka A."/>
            <person name="Voukelatou E."/>
            <person name="Milioni D."/>
            <person name="Hatzopoulos P."/>
            <person name="Piravandi E."/>
            <person name="Obermaier B."/>
            <person name="Hilbert H."/>
            <person name="Duesterhoeft A."/>
            <person name="Moores T."/>
            <person name="Jones J.D.G."/>
            <person name="Eneva T."/>
            <person name="Palme K."/>
            <person name="Benes V."/>
            <person name="Rechmann S."/>
            <person name="Ansorge W."/>
            <person name="Cooke R."/>
            <person name="Berger C."/>
            <person name="Delseny M."/>
            <person name="Voet M."/>
            <person name="Volckaert G."/>
            <person name="Mewes H.-W."/>
            <person name="Klosterman S."/>
            <person name="Schueller C."/>
            <person name="Chalwatzis N."/>
        </authorList>
    </citation>
    <scope>NUCLEOTIDE SEQUENCE [LARGE SCALE GENOMIC DNA]</scope>
    <source>
        <strain>cv. Columbia</strain>
    </source>
</reference>
<reference key="2">
    <citation type="journal article" date="1999" name="Nature">
        <title>Sequence and analysis of chromosome 4 of the plant Arabidopsis thaliana.</title>
        <authorList>
            <person name="Mayer K.F.X."/>
            <person name="Schueller C."/>
            <person name="Wambutt R."/>
            <person name="Murphy G."/>
            <person name="Volckaert G."/>
            <person name="Pohl T."/>
            <person name="Duesterhoeft A."/>
            <person name="Stiekema W."/>
            <person name="Entian K.-D."/>
            <person name="Terryn N."/>
            <person name="Harris B."/>
            <person name="Ansorge W."/>
            <person name="Brandt P."/>
            <person name="Grivell L.A."/>
            <person name="Rieger M."/>
            <person name="Weichselgartner M."/>
            <person name="de Simone V."/>
            <person name="Obermaier B."/>
            <person name="Mache R."/>
            <person name="Mueller M."/>
            <person name="Kreis M."/>
            <person name="Delseny M."/>
            <person name="Puigdomenech P."/>
            <person name="Watson M."/>
            <person name="Schmidtheini T."/>
            <person name="Reichert B."/>
            <person name="Portetelle D."/>
            <person name="Perez-Alonso M."/>
            <person name="Boutry M."/>
            <person name="Bancroft I."/>
            <person name="Vos P."/>
            <person name="Hoheisel J."/>
            <person name="Zimmermann W."/>
            <person name="Wedler H."/>
            <person name="Ridley P."/>
            <person name="Langham S.-A."/>
            <person name="McCullagh B."/>
            <person name="Bilham L."/>
            <person name="Robben J."/>
            <person name="van der Schueren J."/>
            <person name="Grymonprez B."/>
            <person name="Chuang Y.-J."/>
            <person name="Vandenbussche F."/>
            <person name="Braeken M."/>
            <person name="Weltjens I."/>
            <person name="Voet M."/>
            <person name="Bastiaens I."/>
            <person name="Aert R."/>
            <person name="Defoor E."/>
            <person name="Weitzenegger T."/>
            <person name="Bothe G."/>
            <person name="Ramsperger U."/>
            <person name="Hilbert H."/>
            <person name="Braun M."/>
            <person name="Holzer E."/>
            <person name="Brandt A."/>
            <person name="Peters S."/>
            <person name="van Staveren M."/>
            <person name="Dirkse W."/>
            <person name="Mooijman P."/>
            <person name="Klein Lankhorst R."/>
            <person name="Rose M."/>
            <person name="Hauf J."/>
            <person name="Koetter P."/>
            <person name="Berneiser S."/>
            <person name="Hempel S."/>
            <person name="Feldpausch M."/>
            <person name="Lamberth S."/>
            <person name="Van den Daele H."/>
            <person name="De Keyser A."/>
            <person name="Buysshaert C."/>
            <person name="Gielen J."/>
            <person name="Villarroel R."/>
            <person name="De Clercq R."/>
            <person name="van Montagu M."/>
            <person name="Rogers J."/>
            <person name="Cronin A."/>
            <person name="Quail M.A."/>
            <person name="Bray-Allen S."/>
            <person name="Clark L."/>
            <person name="Doggett J."/>
            <person name="Hall S."/>
            <person name="Kay M."/>
            <person name="Lennard N."/>
            <person name="McLay K."/>
            <person name="Mayes R."/>
            <person name="Pettett A."/>
            <person name="Rajandream M.A."/>
            <person name="Lyne M."/>
            <person name="Benes V."/>
            <person name="Rechmann S."/>
            <person name="Borkova D."/>
            <person name="Bloecker H."/>
            <person name="Scharfe M."/>
            <person name="Grimm M."/>
            <person name="Loehnert T.-H."/>
            <person name="Dose S."/>
            <person name="de Haan M."/>
            <person name="Maarse A.C."/>
            <person name="Schaefer M."/>
            <person name="Mueller-Auer S."/>
            <person name="Gabel C."/>
            <person name="Fuchs M."/>
            <person name="Fartmann B."/>
            <person name="Granderath K."/>
            <person name="Dauner D."/>
            <person name="Herzl A."/>
            <person name="Neumann S."/>
            <person name="Argiriou A."/>
            <person name="Vitale D."/>
            <person name="Liguori R."/>
            <person name="Piravandi E."/>
            <person name="Massenet O."/>
            <person name="Quigley F."/>
            <person name="Clabauld G."/>
            <person name="Muendlein A."/>
            <person name="Felber R."/>
            <person name="Schnabl S."/>
            <person name="Hiller R."/>
            <person name="Schmidt W."/>
            <person name="Lecharny A."/>
            <person name="Aubourg S."/>
            <person name="Chefdor F."/>
            <person name="Cooke R."/>
            <person name="Berger C."/>
            <person name="Monfort A."/>
            <person name="Casacuberta E."/>
            <person name="Gibbons T."/>
            <person name="Weber N."/>
            <person name="Vandenbol M."/>
            <person name="Bargues M."/>
            <person name="Terol J."/>
            <person name="Torres A."/>
            <person name="Perez-Perez A."/>
            <person name="Purnelle B."/>
            <person name="Bent E."/>
            <person name="Johnson S."/>
            <person name="Tacon D."/>
            <person name="Jesse T."/>
            <person name="Heijnen L."/>
            <person name="Schwarz S."/>
            <person name="Scholler P."/>
            <person name="Heber S."/>
            <person name="Francs P."/>
            <person name="Bielke C."/>
            <person name="Frishman D."/>
            <person name="Haase D."/>
            <person name="Lemcke K."/>
            <person name="Mewes H.-W."/>
            <person name="Stocker S."/>
            <person name="Zaccaria P."/>
            <person name="Bevan M."/>
            <person name="Wilson R.K."/>
            <person name="de la Bastide M."/>
            <person name="Habermann K."/>
            <person name="Parnell L."/>
            <person name="Dedhia N."/>
            <person name="Gnoj L."/>
            <person name="Schutz K."/>
            <person name="Huang E."/>
            <person name="Spiegel L."/>
            <person name="Sekhon M."/>
            <person name="Murray J."/>
            <person name="Sheet P."/>
            <person name="Cordes M."/>
            <person name="Abu-Threideh J."/>
            <person name="Stoneking T."/>
            <person name="Kalicki J."/>
            <person name="Graves T."/>
            <person name="Harmon G."/>
            <person name="Edwards J."/>
            <person name="Latreille P."/>
            <person name="Courtney L."/>
            <person name="Cloud J."/>
            <person name="Abbott A."/>
            <person name="Scott K."/>
            <person name="Johnson D."/>
            <person name="Minx P."/>
            <person name="Bentley D."/>
            <person name="Fulton B."/>
            <person name="Miller N."/>
            <person name="Greco T."/>
            <person name="Kemp K."/>
            <person name="Kramer J."/>
            <person name="Fulton L."/>
            <person name="Mardis E."/>
            <person name="Dante M."/>
            <person name="Pepin K."/>
            <person name="Hillier L.W."/>
            <person name="Nelson J."/>
            <person name="Spieth J."/>
            <person name="Ryan E."/>
            <person name="Andrews S."/>
            <person name="Geisel C."/>
            <person name="Layman D."/>
            <person name="Du H."/>
            <person name="Ali J."/>
            <person name="Berghoff A."/>
            <person name="Jones K."/>
            <person name="Drone K."/>
            <person name="Cotton M."/>
            <person name="Joshu C."/>
            <person name="Antonoiu B."/>
            <person name="Zidanic M."/>
            <person name="Strong C."/>
            <person name="Sun H."/>
            <person name="Lamar B."/>
            <person name="Yordan C."/>
            <person name="Ma P."/>
            <person name="Zhong J."/>
            <person name="Preston R."/>
            <person name="Vil D."/>
            <person name="Shekher M."/>
            <person name="Matero A."/>
            <person name="Shah R."/>
            <person name="Swaby I.K."/>
            <person name="O'Shaughnessy A."/>
            <person name="Rodriguez M."/>
            <person name="Hoffman J."/>
            <person name="Till S."/>
            <person name="Granat S."/>
            <person name="Shohdy N."/>
            <person name="Hasegawa A."/>
            <person name="Hameed A."/>
            <person name="Lodhi M."/>
            <person name="Johnson A."/>
            <person name="Chen E."/>
            <person name="Marra M.A."/>
            <person name="Martienssen R."/>
            <person name="McCombie W.R."/>
        </authorList>
    </citation>
    <scope>NUCLEOTIDE SEQUENCE [LARGE SCALE GENOMIC DNA]</scope>
    <source>
        <strain>cv. Columbia</strain>
    </source>
</reference>
<reference key="3">
    <citation type="journal article" date="2017" name="Plant J.">
        <title>Araport11: a complete reannotation of the Arabidopsis thaliana reference genome.</title>
        <authorList>
            <person name="Cheng C.Y."/>
            <person name="Krishnakumar V."/>
            <person name="Chan A.P."/>
            <person name="Thibaud-Nissen F."/>
            <person name="Schobel S."/>
            <person name="Town C.D."/>
        </authorList>
    </citation>
    <scope>GENOME REANNOTATION</scope>
    <source>
        <strain>cv. Columbia</strain>
    </source>
</reference>
<reference key="4">
    <citation type="journal article" date="2003" name="Science">
        <title>Empirical analysis of transcriptional activity in the Arabidopsis genome.</title>
        <authorList>
            <person name="Yamada K."/>
            <person name="Lim J."/>
            <person name="Dale J.M."/>
            <person name="Chen H."/>
            <person name="Shinn P."/>
            <person name="Palm C.J."/>
            <person name="Southwick A.M."/>
            <person name="Wu H.C."/>
            <person name="Kim C.J."/>
            <person name="Nguyen M."/>
            <person name="Pham P.K."/>
            <person name="Cheuk R.F."/>
            <person name="Karlin-Newmann G."/>
            <person name="Liu S.X."/>
            <person name="Lam B."/>
            <person name="Sakano H."/>
            <person name="Wu T."/>
            <person name="Yu G."/>
            <person name="Miranda M."/>
            <person name="Quach H.L."/>
            <person name="Tripp M."/>
            <person name="Chang C.H."/>
            <person name="Lee J.M."/>
            <person name="Toriumi M.J."/>
            <person name="Chan M.M."/>
            <person name="Tang C.C."/>
            <person name="Onodera C.S."/>
            <person name="Deng J.M."/>
            <person name="Akiyama K."/>
            <person name="Ansari Y."/>
            <person name="Arakawa T."/>
            <person name="Banh J."/>
            <person name="Banno F."/>
            <person name="Bowser L."/>
            <person name="Brooks S.Y."/>
            <person name="Carninci P."/>
            <person name="Chao Q."/>
            <person name="Choy N."/>
            <person name="Enju A."/>
            <person name="Goldsmith A.D."/>
            <person name="Gurjal M."/>
            <person name="Hansen N.F."/>
            <person name="Hayashizaki Y."/>
            <person name="Johnson-Hopson C."/>
            <person name="Hsuan V.W."/>
            <person name="Iida K."/>
            <person name="Karnes M."/>
            <person name="Khan S."/>
            <person name="Koesema E."/>
            <person name="Ishida J."/>
            <person name="Jiang P.X."/>
            <person name="Jones T."/>
            <person name="Kawai J."/>
            <person name="Kamiya A."/>
            <person name="Meyers C."/>
            <person name="Nakajima M."/>
            <person name="Narusaka M."/>
            <person name="Seki M."/>
            <person name="Sakurai T."/>
            <person name="Satou M."/>
            <person name="Tamse R."/>
            <person name="Vaysberg M."/>
            <person name="Wallender E.K."/>
            <person name="Wong C."/>
            <person name="Yamamura Y."/>
            <person name="Yuan S."/>
            <person name="Shinozaki K."/>
            <person name="Davis R.W."/>
            <person name="Theologis A."/>
            <person name="Ecker J.R."/>
        </authorList>
    </citation>
    <scope>NUCLEOTIDE SEQUENCE [LARGE SCALE MRNA] OF 38-446</scope>
    <source>
        <strain>cv. Columbia</strain>
    </source>
</reference>
<reference key="5">
    <citation type="journal article" date="1999" name="Development">
        <title>Genetic control of trichome branch number in Arabidopsis: the roles of the FURCA loci.</title>
        <authorList>
            <person name="Luo D."/>
            <person name="Oppenheimer D.G."/>
        </authorList>
    </citation>
    <scope>FUNCTION</scope>
    <scope>DISRUPTION PHENOTYPE</scope>
</reference>
<reference key="6">
    <citation type="journal article" date="2005" name="BMC Evol. Biol.">
        <title>Genome-wide comparative analysis of the IQD gene families in Arabidopsis thaliana and Oryza sativa.</title>
        <authorList>
            <person name="Abel S."/>
            <person name="Savchenko T."/>
            <person name="Levy M."/>
        </authorList>
    </citation>
    <scope>INTERACTION WITH CALMODULIN</scope>
    <scope>GENE FAMILY</scope>
    <scope>NOMENCLATURE</scope>
    <source>
        <strain>cv. Columbia</strain>
    </source>
</reference>
<reference key="7">
    <citation type="journal article" date="2017" name="Plant Physiol.">
        <title>The IQD family of calmodulin-binding proteins links calcium signaling to microtubules, membrane subdomains, and the nucleus.</title>
        <authorList>
            <person name="Buerstenbinder K."/>
            <person name="Moeller B."/>
            <person name="Ploetner R."/>
            <person name="Stamm G."/>
            <person name="Hause G."/>
            <person name="Mitra D."/>
            <person name="Abel S."/>
        </authorList>
    </citation>
    <scope>SUBCELLULAR LOCATION</scope>
    <source>
        <strain>cv. Columbia</strain>
    </source>
</reference>
<reference key="8">
    <citation type="journal article" date="2017" name="Plant Signal. Behav.">
        <title>Functions of IQD proteins as hubs in cellular calcium and auxin signaling: A toolbox for shape formation and tissue-specification in plants?</title>
        <authorList>
            <person name="Buerstenbinder K."/>
            <person name="Mitra D."/>
            <person name="Quegwer J."/>
        </authorList>
    </citation>
    <scope>REVIEW</scope>
</reference>
<proteinExistence type="evidence at protein level"/>
<dbReference type="EMBL" id="Z97337">
    <property type="protein sequence ID" value="CAB10254.1"/>
    <property type="status" value="ALT_SEQ"/>
    <property type="molecule type" value="Genomic_DNA"/>
</dbReference>
<dbReference type="EMBL" id="AL161539">
    <property type="protein sequence ID" value="CAB78517.1"/>
    <property type="status" value="ALT_SEQ"/>
    <property type="molecule type" value="Genomic_DNA"/>
</dbReference>
<dbReference type="EMBL" id="CP002687">
    <property type="protein sequence ID" value="ANM66770.1"/>
    <property type="molecule type" value="Genomic_DNA"/>
</dbReference>
<dbReference type="EMBL" id="AY080719">
    <property type="protein sequence ID" value="AAL86322.1"/>
    <property type="molecule type" value="mRNA"/>
</dbReference>
<dbReference type="PIR" id="D71410">
    <property type="entry name" value="D71410"/>
</dbReference>
<dbReference type="RefSeq" id="NP_001328646.1">
    <property type="nucleotide sequence ID" value="NM_001340965.1"/>
</dbReference>
<dbReference type="SMR" id="A0A1P8B590"/>
<dbReference type="FunCoup" id="A0A1P8B590">
    <property type="interactions" value="238"/>
</dbReference>
<dbReference type="iPTMnet" id="A0A1P8B590"/>
<dbReference type="PaxDb" id="3702-AT4G14750.1"/>
<dbReference type="ProteomicsDB" id="214432"/>
<dbReference type="EnsemblPlants" id="AT4G14750.2">
    <property type="protein sequence ID" value="AT4G14750.2"/>
    <property type="gene ID" value="AT4G14750"/>
</dbReference>
<dbReference type="GeneID" id="827130"/>
<dbReference type="Gramene" id="AT4G14750.2">
    <property type="protein sequence ID" value="AT4G14750.2"/>
    <property type="gene ID" value="AT4G14750"/>
</dbReference>
<dbReference type="KEGG" id="ath:AT4G14750"/>
<dbReference type="Araport" id="AT4G14750"/>
<dbReference type="TAIR" id="AT4G14750">
    <property type="gene designation" value="IQD19"/>
</dbReference>
<dbReference type="eggNOG" id="ENOG502QS5R">
    <property type="taxonomic scope" value="Eukaryota"/>
</dbReference>
<dbReference type="InParanoid" id="A0A1P8B590"/>
<dbReference type="OrthoDB" id="685302at2759"/>
<dbReference type="PRO" id="PR:A0A1P8B590"/>
<dbReference type="Proteomes" id="UP000006548">
    <property type="component" value="Chromosome 4"/>
</dbReference>
<dbReference type="ExpressionAtlas" id="A0A1P8B590">
    <property type="expression patterns" value="baseline and differential"/>
</dbReference>
<dbReference type="GO" id="GO:0005737">
    <property type="term" value="C:cytoplasm"/>
    <property type="evidence" value="ECO:0007669"/>
    <property type="project" value="UniProtKB-KW"/>
</dbReference>
<dbReference type="GO" id="GO:0005856">
    <property type="term" value="C:cytoskeleton"/>
    <property type="evidence" value="ECO:0007669"/>
    <property type="project" value="UniProtKB-SubCell"/>
</dbReference>
<dbReference type="GO" id="GO:0005886">
    <property type="term" value="C:plasma membrane"/>
    <property type="evidence" value="ECO:0007669"/>
    <property type="project" value="UniProtKB-SubCell"/>
</dbReference>
<dbReference type="GO" id="GO:0005516">
    <property type="term" value="F:calmodulin binding"/>
    <property type="evidence" value="ECO:0007669"/>
    <property type="project" value="UniProtKB-KW"/>
</dbReference>
<dbReference type="GO" id="GO:0010091">
    <property type="term" value="P:trichome branching"/>
    <property type="evidence" value="ECO:0000315"/>
    <property type="project" value="UniProtKB"/>
</dbReference>
<dbReference type="CDD" id="cd23767">
    <property type="entry name" value="IQCD"/>
    <property type="match status" value="1"/>
</dbReference>
<dbReference type="Gene3D" id="1.20.5.190">
    <property type="match status" value="1"/>
</dbReference>
<dbReference type="InterPro" id="IPR025064">
    <property type="entry name" value="DUF4005"/>
</dbReference>
<dbReference type="InterPro" id="IPR000048">
    <property type="entry name" value="IQ_motif_EF-hand-BS"/>
</dbReference>
<dbReference type="PANTHER" id="PTHR32295">
    <property type="entry name" value="IQ-DOMAIN 5-RELATED"/>
    <property type="match status" value="1"/>
</dbReference>
<dbReference type="PANTHER" id="PTHR32295:SF45">
    <property type="entry name" value="PROTEIN IQ-DOMAIN 19"/>
    <property type="match status" value="1"/>
</dbReference>
<dbReference type="Pfam" id="PF13178">
    <property type="entry name" value="DUF4005"/>
    <property type="match status" value="1"/>
</dbReference>
<dbReference type="Pfam" id="PF00612">
    <property type="entry name" value="IQ"/>
    <property type="match status" value="2"/>
</dbReference>
<dbReference type="SMART" id="SM00015">
    <property type="entry name" value="IQ"/>
    <property type="match status" value="2"/>
</dbReference>
<dbReference type="SUPFAM" id="SSF101447">
    <property type="entry name" value="Formin homology 2 domain (FH2 domain)"/>
    <property type="match status" value="1"/>
</dbReference>
<dbReference type="PROSITE" id="PS50096">
    <property type="entry name" value="IQ"/>
    <property type="match status" value="2"/>
</dbReference>
<comment type="function">
    <text evidence="1 4">May be involved in cooperative interactions with calmodulins or calmodulin-like proteins (By similarity). Recruits calmodulin proteins to microtubules, thus being a potential scaffold in cellular signaling and trafficking (By similarity). Acts as a positive regulator of trichome branch initiation (PubMed:10572032). May associate with nucleic acids and regulate gene expression at the transcriptional or post-transcriptional level (By similarity).</text>
</comment>
<comment type="subunit">
    <text evidence="1">Binds to multiple calmodulin (CaM) in the presence of Ca(2+) and CaM-like proteins.</text>
</comment>
<comment type="subcellular location">
    <subcellularLocation>
        <location evidence="5">Cytoplasm</location>
        <location evidence="5">Cytoskeleton</location>
    </subcellularLocation>
    <subcellularLocation>
        <location evidence="5">Cell membrane</location>
    </subcellularLocation>
</comment>
<comment type="disruption phenotype">
    <text evidence="4">Reduced trichome branch number.</text>
</comment>
<comment type="miscellaneous">
    <text evidence="9">'Furca' means two-pronged fork in Latin.</text>
</comment>
<comment type="similarity">
    <text evidence="8">Belongs to the IQD family.</text>
</comment>
<comment type="sequence caution" evidence="8">
    <conflict type="erroneous gene model prediction">
        <sequence resource="EMBL-CDS" id="CAB10254"/>
    </conflict>
</comment>
<comment type="sequence caution" evidence="8">
    <conflict type="erroneous gene model prediction">
        <sequence resource="EMBL-CDS" id="CAB78517"/>
    </conflict>
</comment>
<feature type="chain" id="PRO_0000453125" description="Protein IQ-DOMAIN 19">
    <location>
        <begin position="1"/>
        <end position="446"/>
    </location>
</feature>
<feature type="domain" description="IQ 1" evidence="2">
    <location>
        <begin position="163"/>
        <end position="191"/>
    </location>
</feature>
<feature type="domain" description="IQ 2" evidence="2">
    <location>
        <begin position="192"/>
        <end position="214"/>
    </location>
</feature>
<feature type="region of interest" description="Disordered" evidence="3">
    <location>
        <begin position="93"/>
        <end position="140"/>
    </location>
</feature>
<feature type="region of interest" description="Calmodulin-binding" evidence="7">
    <location>
        <begin position="214"/>
        <end position="231"/>
    </location>
</feature>
<feature type="region of interest" description="Disordered" evidence="3">
    <location>
        <begin position="332"/>
        <end position="398"/>
    </location>
</feature>
<feature type="compositionally biased region" description="Pro residues" evidence="3">
    <location>
        <begin position="125"/>
        <end position="139"/>
    </location>
</feature>
<feature type="compositionally biased region" description="Low complexity" evidence="3">
    <location>
        <begin position="332"/>
        <end position="345"/>
    </location>
</feature>
<feature type="compositionally biased region" description="Polar residues" evidence="3">
    <location>
        <begin position="379"/>
        <end position="392"/>
    </location>
</feature>
<sequence>MVLGCPKREAVKEFGVQCLKQENVCPIITSRNQTHTHTHITISSSLTLHNGGLSLQKIIMGKTSKWFRSLLTGKKERTKEHIIQSECVFTSSIPGTPKEKRRWSFRRSSATGPPPPACAITLKDSPPPPPPPPPPPPLQQPFVVEIVDNEDEQIKNVSAEEIEEFAAIKIQACYRSHLARKALRALKGLVKLQALVRGHLVRKQATATLRCMQALITLQAKAREQRIRMIGGDSTNPRTSIHKTRINNFYHENEENIKIVEMDIQSKMYSPAPSALTEMSPRAYSSHFEDCNSFNTAQSSPQCFSRFKEYYNGDTLSSYDYPLFPNYMANTQSSKAKARSQSAPKQRPPEIYEKQMSGRRRSSMEAPRNNGVPRAVRMQRSSSQLGSNTAKESQQHHHHQYYPWMAIKLDRSNISLMESECGSTSTVMTNTNYGRHVDVQGNNNMY</sequence>
<evidence type="ECO:0000250" key="1">
    <source>
        <dbReference type="UniProtKB" id="Q9SF32"/>
    </source>
</evidence>
<evidence type="ECO:0000255" key="2">
    <source>
        <dbReference type="PROSITE-ProRule" id="PRU00116"/>
    </source>
</evidence>
<evidence type="ECO:0000256" key="3">
    <source>
        <dbReference type="SAM" id="MobiDB-lite"/>
    </source>
</evidence>
<evidence type="ECO:0000269" key="4">
    <source>
    </source>
</evidence>
<evidence type="ECO:0000269" key="5">
    <source>
    </source>
</evidence>
<evidence type="ECO:0000303" key="6">
    <source>
    </source>
</evidence>
<evidence type="ECO:0000303" key="7">
    <source>
    </source>
</evidence>
<evidence type="ECO:0000305" key="8"/>
<evidence type="ECO:0000305" key="9">
    <source>
    </source>
</evidence>
<evidence type="ECO:0000312" key="10">
    <source>
        <dbReference type="Araport" id="AT4G14750"/>
    </source>
</evidence>
<evidence type="ECO:0000312" key="11">
    <source>
        <dbReference type="EMBL" id="CAB10254.1"/>
    </source>
</evidence>
<evidence type="ECO:0000312" key="12">
    <source>
        <dbReference type="EMBL" id="CAB78517.1"/>
    </source>
</evidence>
<keyword id="KW-0112">Calmodulin-binding</keyword>
<keyword id="KW-1003">Cell membrane</keyword>
<keyword id="KW-0963">Cytoplasm</keyword>
<keyword id="KW-0206">Cytoskeleton</keyword>
<keyword id="KW-0472">Membrane</keyword>
<keyword id="KW-1185">Reference proteome</keyword>
<keyword id="KW-0677">Repeat</keyword>
<name>IQD19_ARATH</name>
<gene>
    <name evidence="7" type="primary">IQD19</name>
    <name evidence="6" type="synonym">FRC3</name>
    <name evidence="10" type="ordered locus">At4g14750</name>
    <name evidence="11" type="ORF">dl3415w</name>
    <name evidence="12" type="ORF">FCAALL.303</name>
</gene>
<organism>
    <name type="scientific">Arabidopsis thaliana</name>
    <name type="common">Mouse-ear cress</name>
    <dbReference type="NCBI Taxonomy" id="3702"/>
    <lineage>
        <taxon>Eukaryota</taxon>
        <taxon>Viridiplantae</taxon>
        <taxon>Streptophyta</taxon>
        <taxon>Embryophyta</taxon>
        <taxon>Tracheophyta</taxon>
        <taxon>Spermatophyta</taxon>
        <taxon>Magnoliopsida</taxon>
        <taxon>eudicotyledons</taxon>
        <taxon>Gunneridae</taxon>
        <taxon>Pentapetalae</taxon>
        <taxon>rosids</taxon>
        <taxon>malvids</taxon>
        <taxon>Brassicales</taxon>
        <taxon>Brassicaceae</taxon>
        <taxon>Camelineae</taxon>
        <taxon>Arabidopsis</taxon>
    </lineage>
</organism>